<reference key="1">
    <citation type="journal article" date="2009" name="PLoS Genet.">
        <title>The complete genome and proteome of Laribacter hongkongensis reveal potential mechanisms for adaptations to different temperatures and habitats.</title>
        <authorList>
            <person name="Woo P.C.Y."/>
            <person name="Lau S.K.P."/>
            <person name="Tse H."/>
            <person name="Teng J.L.L."/>
            <person name="Curreem S.O."/>
            <person name="Tsang A.K.L."/>
            <person name="Fan R.Y.Y."/>
            <person name="Wong G.K.M."/>
            <person name="Huang Y."/>
            <person name="Loman N.J."/>
            <person name="Snyder L.A.S."/>
            <person name="Cai J.J."/>
            <person name="Huang J.-D."/>
            <person name="Mak W."/>
            <person name="Pallen M.J."/>
            <person name="Lok S."/>
            <person name="Yuen K.-Y."/>
        </authorList>
    </citation>
    <scope>NUCLEOTIDE SEQUENCE [LARGE SCALE GENOMIC DNA]</scope>
    <source>
        <strain>HLHK9</strain>
    </source>
</reference>
<gene>
    <name evidence="1" type="primary">nuoC</name>
    <name type="ordered locus">LHK_00529</name>
</gene>
<accession>C1DCA5</accession>
<proteinExistence type="inferred from homology"/>
<keyword id="KW-0997">Cell inner membrane</keyword>
<keyword id="KW-1003">Cell membrane</keyword>
<keyword id="KW-0472">Membrane</keyword>
<keyword id="KW-0520">NAD</keyword>
<keyword id="KW-0874">Quinone</keyword>
<keyword id="KW-1185">Reference proteome</keyword>
<keyword id="KW-1278">Translocase</keyword>
<keyword id="KW-0813">Transport</keyword>
<keyword id="KW-0830">Ubiquinone</keyword>
<evidence type="ECO:0000255" key="1">
    <source>
        <dbReference type="HAMAP-Rule" id="MF_01357"/>
    </source>
</evidence>
<comment type="function">
    <text evidence="1">NDH-1 shuttles electrons from NADH, via FMN and iron-sulfur (Fe-S) centers, to quinones in the respiratory chain. The immediate electron acceptor for the enzyme in this species is believed to be ubiquinone. Couples the redox reaction to proton translocation (for every two electrons transferred, four hydrogen ions are translocated across the cytoplasmic membrane), and thus conserves the redox energy in a proton gradient.</text>
</comment>
<comment type="catalytic activity">
    <reaction evidence="1">
        <text>a quinone + NADH + 5 H(+)(in) = a quinol + NAD(+) + 4 H(+)(out)</text>
        <dbReference type="Rhea" id="RHEA:57888"/>
        <dbReference type="ChEBI" id="CHEBI:15378"/>
        <dbReference type="ChEBI" id="CHEBI:24646"/>
        <dbReference type="ChEBI" id="CHEBI:57540"/>
        <dbReference type="ChEBI" id="CHEBI:57945"/>
        <dbReference type="ChEBI" id="CHEBI:132124"/>
    </reaction>
</comment>
<comment type="subunit">
    <text evidence="1">NDH-1 is composed of 14 different subunits. Subunits NuoB, C, D, E, F, and G constitute the peripheral sector of the complex.</text>
</comment>
<comment type="subcellular location">
    <subcellularLocation>
        <location evidence="1">Cell inner membrane</location>
        <topology evidence="1">Peripheral membrane protein</topology>
        <orientation evidence="1">Cytoplasmic side</orientation>
    </subcellularLocation>
</comment>
<comment type="similarity">
    <text evidence="1">Belongs to the complex I 30 kDa subunit family.</text>
</comment>
<name>NUOC_LARHH</name>
<feature type="chain" id="PRO_1000166673" description="NADH-quinone oxidoreductase subunit C">
    <location>
        <begin position="1"/>
        <end position="195"/>
    </location>
</feature>
<dbReference type="EC" id="7.1.1.-" evidence="1"/>
<dbReference type="EMBL" id="CP001154">
    <property type="protein sequence ID" value="ACO73522.1"/>
    <property type="molecule type" value="Genomic_DNA"/>
</dbReference>
<dbReference type="RefSeq" id="WP_012696014.1">
    <property type="nucleotide sequence ID" value="NC_012559.1"/>
</dbReference>
<dbReference type="SMR" id="C1DCA5"/>
<dbReference type="STRING" id="557598.LHK_00529"/>
<dbReference type="KEGG" id="lhk:LHK_00529"/>
<dbReference type="eggNOG" id="COG0852">
    <property type="taxonomic scope" value="Bacteria"/>
</dbReference>
<dbReference type="HOGENOM" id="CLU_042628_2_1_4"/>
<dbReference type="Proteomes" id="UP000002010">
    <property type="component" value="Chromosome"/>
</dbReference>
<dbReference type="GO" id="GO:0005886">
    <property type="term" value="C:plasma membrane"/>
    <property type="evidence" value="ECO:0007669"/>
    <property type="project" value="UniProtKB-SubCell"/>
</dbReference>
<dbReference type="GO" id="GO:0008137">
    <property type="term" value="F:NADH dehydrogenase (ubiquinone) activity"/>
    <property type="evidence" value="ECO:0007669"/>
    <property type="project" value="InterPro"/>
</dbReference>
<dbReference type="GO" id="GO:0050136">
    <property type="term" value="F:NADH:ubiquinone reductase (non-electrogenic) activity"/>
    <property type="evidence" value="ECO:0007669"/>
    <property type="project" value="UniProtKB-UniRule"/>
</dbReference>
<dbReference type="GO" id="GO:0048038">
    <property type="term" value="F:quinone binding"/>
    <property type="evidence" value="ECO:0007669"/>
    <property type="project" value="UniProtKB-KW"/>
</dbReference>
<dbReference type="Gene3D" id="3.30.460.80">
    <property type="entry name" value="NADH:ubiquinone oxidoreductase, 30kDa subunit"/>
    <property type="match status" value="1"/>
</dbReference>
<dbReference type="HAMAP" id="MF_01357">
    <property type="entry name" value="NDH1_NuoC"/>
    <property type="match status" value="1"/>
</dbReference>
<dbReference type="InterPro" id="IPR010218">
    <property type="entry name" value="NADH_DH_suC"/>
</dbReference>
<dbReference type="InterPro" id="IPR037232">
    <property type="entry name" value="NADH_quin_OxRdtase_su_C/D-like"/>
</dbReference>
<dbReference type="InterPro" id="IPR001268">
    <property type="entry name" value="NADH_UbQ_OxRdtase_30kDa_su"/>
</dbReference>
<dbReference type="InterPro" id="IPR020396">
    <property type="entry name" value="NADH_UbQ_OxRdtase_CS"/>
</dbReference>
<dbReference type="NCBIfam" id="TIGR01961">
    <property type="entry name" value="NuoC_fam"/>
    <property type="match status" value="1"/>
</dbReference>
<dbReference type="NCBIfam" id="NF004730">
    <property type="entry name" value="PRK06074.1-1"/>
    <property type="match status" value="1"/>
</dbReference>
<dbReference type="PANTHER" id="PTHR10884:SF14">
    <property type="entry name" value="NADH DEHYDROGENASE [UBIQUINONE] IRON-SULFUR PROTEIN 3, MITOCHONDRIAL"/>
    <property type="match status" value="1"/>
</dbReference>
<dbReference type="PANTHER" id="PTHR10884">
    <property type="entry name" value="NADH DEHYDROGENASE UBIQUINONE IRON-SULFUR PROTEIN 3"/>
    <property type="match status" value="1"/>
</dbReference>
<dbReference type="Pfam" id="PF00329">
    <property type="entry name" value="Complex1_30kDa"/>
    <property type="match status" value="1"/>
</dbReference>
<dbReference type="SUPFAM" id="SSF143243">
    <property type="entry name" value="Nqo5-like"/>
    <property type="match status" value="1"/>
</dbReference>
<dbReference type="PROSITE" id="PS00542">
    <property type="entry name" value="COMPLEX1_30K"/>
    <property type="match status" value="1"/>
</dbReference>
<organism>
    <name type="scientific">Laribacter hongkongensis (strain HLHK9)</name>
    <dbReference type="NCBI Taxonomy" id="557598"/>
    <lineage>
        <taxon>Bacteria</taxon>
        <taxon>Pseudomonadati</taxon>
        <taxon>Pseudomonadota</taxon>
        <taxon>Betaproteobacteria</taxon>
        <taxon>Neisseriales</taxon>
        <taxon>Aquaspirillaceae</taxon>
        <taxon>Laribacter</taxon>
    </lineage>
</organism>
<sequence>MASSLDALKARVESLLGDHLESATIDRGELTIVCSASSIAVSCQLLRDQAGFDQCIDLCGMDYSTYRDGLHDRPRFAVVLHLMSVQNNQRLRVRFFAPDDDFPVVPSLIDVWASVNWYEREAFDMYGIVFEGHPDLRRILTDYGFVGHPFRKDFPVSGHVEMRYDPTEGRVIYQPVTIEPREITPRIIREENYGG</sequence>
<protein>
    <recommendedName>
        <fullName evidence="1">NADH-quinone oxidoreductase subunit C</fullName>
        <ecNumber evidence="1">7.1.1.-</ecNumber>
    </recommendedName>
    <alternativeName>
        <fullName evidence="1">NADH dehydrogenase I subunit C</fullName>
    </alternativeName>
    <alternativeName>
        <fullName evidence="1">NDH-1 subunit C</fullName>
    </alternativeName>
</protein>